<dbReference type="EMBL" id="AE009441">
    <property type="protein sequence ID" value="AAL62879.1"/>
    <property type="molecule type" value="Genomic_DNA"/>
</dbReference>
<dbReference type="EMBL" id="AE009441">
    <property type="protein sequence ID" value="AAL63884.1"/>
    <property type="molecule type" value="Genomic_DNA"/>
</dbReference>
<dbReference type="SMR" id="Q8ZSL3"/>
<dbReference type="STRING" id="178306.PAE0586"/>
<dbReference type="EnsemblBacteria" id="AAL62879">
    <property type="protein sequence ID" value="AAL62879"/>
    <property type="gene ID" value="PAE0586"/>
</dbReference>
<dbReference type="EnsemblBacteria" id="AAL63884">
    <property type="protein sequence ID" value="AAL63884"/>
    <property type="gene ID" value="PAE2015"/>
</dbReference>
<dbReference type="KEGG" id="pai:PAE0586"/>
<dbReference type="KEGG" id="pai:PAE2015"/>
<dbReference type="PATRIC" id="fig|178306.9.peg.1489"/>
<dbReference type="eggNOG" id="arCOG05433">
    <property type="taxonomic scope" value="Archaea"/>
</dbReference>
<dbReference type="HOGENOM" id="CLU_2857250_0_0_2"/>
<dbReference type="InParanoid" id="Q8ZSL3"/>
<dbReference type="Proteomes" id="UP000002439">
    <property type="component" value="Chromosome"/>
</dbReference>
<dbReference type="GO" id="GO:0016020">
    <property type="term" value="C:membrane"/>
    <property type="evidence" value="ECO:0007669"/>
    <property type="project" value="UniProtKB-SubCell"/>
</dbReference>
<keyword id="KW-0472">Membrane</keyword>
<keyword id="KW-1185">Reference proteome</keyword>
<keyword id="KW-0812">Transmembrane</keyword>
<keyword id="KW-1133">Transmembrane helix</keyword>
<organism>
    <name type="scientific">Pyrobaculum aerophilum (strain ATCC 51768 / DSM 7523 / JCM 9630 / CIP 104966 / NBRC 100827 / IM2)</name>
    <dbReference type="NCBI Taxonomy" id="178306"/>
    <lineage>
        <taxon>Archaea</taxon>
        <taxon>Thermoproteota</taxon>
        <taxon>Thermoprotei</taxon>
        <taxon>Thermoproteales</taxon>
        <taxon>Thermoproteaceae</taxon>
        <taxon>Pyrobaculum</taxon>
    </lineage>
</organism>
<name>Y586_PYRAE</name>
<comment type="subcellular location">
    <subcellularLocation>
        <location evidence="2">Membrane</location>
        <topology evidence="2">Single-pass membrane protein</topology>
    </subcellularLocation>
</comment>
<reference key="1">
    <citation type="journal article" date="2002" name="Proc. Natl. Acad. Sci. U.S.A.">
        <title>Genome sequence of the hyperthermophilic crenarchaeon Pyrobaculum aerophilum.</title>
        <authorList>
            <person name="Fitz-Gibbon S.T."/>
            <person name="Ladner H."/>
            <person name="Kim U.-J."/>
            <person name="Stetter K.O."/>
            <person name="Simon M.I."/>
            <person name="Miller J.H."/>
        </authorList>
    </citation>
    <scope>NUCLEOTIDE SEQUENCE [LARGE SCALE GENOMIC DNA]</scope>
    <source>
        <strain>ATCC 51768 / DSM 7523 / JCM 9630 / CIP 104966 / NBRC 100827 / IM2</strain>
    </source>
</reference>
<sequence length="59" mass="6148">MLVEEVLLLLVAIALISAFALTVTGVVQNAVSQILGFRNATNNVINGLVDAVKQLIGLS</sequence>
<proteinExistence type="predicted"/>
<protein>
    <recommendedName>
        <fullName>Uncharacterized protein PAE0586/PAE2015</fullName>
    </recommendedName>
</protein>
<evidence type="ECO:0000255" key="1"/>
<evidence type="ECO:0000305" key="2"/>
<accession>Q8ZSL3</accession>
<feature type="chain" id="PRO_0000201240" description="Uncharacterized protein PAE0586/PAE2015">
    <location>
        <begin position="1"/>
        <end position="59"/>
    </location>
</feature>
<feature type="transmembrane region" description="Helical" evidence="1">
    <location>
        <begin position="7"/>
        <end position="27"/>
    </location>
</feature>
<gene>
    <name type="ordered locus">PAE0586</name>
</gene>
<gene>
    <name type="ordered locus">PAE2015</name>
</gene>